<feature type="chain" id="PRO_0000450423" description="Nonribosomal peptide synthetase acrB">
    <location>
        <begin position="1"/>
        <end position="1552"/>
    </location>
</feature>
<feature type="domain" description="Carrier" evidence="2 6">
    <location>
        <begin position="1110"/>
        <end position="1186"/>
    </location>
</feature>
<feature type="region of interest" description="Condensation" evidence="1 6">
    <location>
        <begin position="129"/>
        <end position="564"/>
    </location>
</feature>
<feature type="region of interest" description="Adenylation" evidence="1 6">
    <location>
        <begin position="594"/>
        <end position="999"/>
    </location>
</feature>
<feature type="region of interest" description="Thiolester reductase (R) domain" evidence="1 6">
    <location>
        <begin position="1226"/>
        <end position="1464"/>
    </location>
</feature>
<feature type="modified residue" description="O-(pantetheine 4'-phosphoryl)serine" evidence="2">
    <location>
        <position position="1146"/>
    </location>
</feature>
<protein>
    <recommendedName>
        <fullName evidence="4">Nonribosomal peptide synthetase acrB</fullName>
        <ecNumber evidence="3">6.3.2.-</ecNumber>
    </recommendedName>
    <alternativeName>
        <fullName evidence="4">Acurin A biosynthesis cluster protein B</fullName>
    </alternativeName>
</protein>
<gene>
    <name evidence="4" type="primary">acrB</name>
    <name type="ORF">ASPACDRAFT_122295</name>
</gene>
<sequence>MIMTANNDMAVRESVVVTEGASSTPELWQMLGSRDQPTNITPRVRITDVDHKQLHSSANLVSARALQQLTKSLHEGICSTALEDDSQSSSAYYSTYASTPRSLSPNLEAVPSDDGIPDLQPQFEAVERASFAQERIWFLHEYLTDPTTFNVTMAYAVQGPLQPAELATAFRAMSDRHESLRTAFFLDSRDGEPQLFQGILPETQIEISIHTIDSTQVVDEVYASVRDHVYDLPRGKTMKVAILTLTPTTHFLVLGFHHIALDGFSAQIFIKDLQLIYSTGQILPPAPRYRDYTLLQRQSLANDTYRESLDFWKSKLANLPPPMPLFAFSRVAARKPLNSYRVHSVERTIGISLASKIKDTAHKVGGTTSFFLYLTALRELVFRLLGHAQRDICLGISDAGRADKEALQVVGMFVNMLPLQFRAARPGQSFRDLLATTTRQVRTALTHAAVPYQVLLDELAVQRSPSENPLFQILLNYKMGSTEEATLGHCRAHSLRMDDARTGLDLVIEVEEFVDGNFQVAVRGQEYLYGEEGLEFILSSLVTILEEVTLRPSMPVANLAIFDEKSITHALELSRGEHVFTAEHLLTVVHLFDRHCKAHPRDVAVKQADGQFLSYGELQGRAQELARRLQELEGSTAVVVACKPSLDTIVSIVGIHYAGCTYVPVDIEHPEERLRTIVEDCKPRAILYHADTQDLAVALAGGAIAVPTPQSGMDKAFPIKASVNDTAYILYTSGSTGKPKGVIVSHGNLTCQILSMRRTATLGKETVLHQSGVAFDASIDCVYAALAGQGTLVMAPPEVRRDPVQLASLMAREQITYTQMTSSEYHNLVVYGAEHLKQCVTYRNAFCGGEKFLSSLIPLFRALELPALRVWNRYGPTEITVSSSMQMIVGADGLNRSTELIPCGRPLTNYSVFILDEQRRPVPAGVPGEICIGGGGVAQGYLNNARLTASKFVKNIYASEDDVRRGWDRLYRTGDRGYLLSDGSLVFLGRMEGSAQVKIRGQRVELDEIETAIVATSEGRVLSAGVCVKGDNADAVLAAYVVLRPDVQVDSLSSLVASLARSLPLPRYMRPSSFVAVGRLPHNTSGKLDRQALSKLSGTPIAIETNNHPAPLGVEEEVMAKAWREVLPGEAVLSAESNFFDVGGNSLLLVRLQKVIEELTGKSVALTELFSTPGMSAMARLLQPQEATRETTEVDWESETQLTPSLLSAIQTSSRCSPSSEVEVILTGATGFLGRTLLQQLLAHPRIAHVHCLAIRNSSVTRASLTSNPDHAAKLTLYHGDLSHPTLSLNEETISSLSNRIGLVIHNGASVSFLKSYSTLRAPNVHSSRFLLQLSIERGIPFHFVSTGGVVNLTGQPTWPPVSVRNYPPPGEQGYIASKWASERLIENAAEALHLRGVHLPVVVHRPASIVARQPGTPGTSQSEPPAMDIMHNMVQYARIMQCFPATEGVNWRFDFVGVDAVASGILASALGEEDESEGVKYVHHCNERKLSPRELKKELEEEAGCVFEEVEVGEWVRRAKECGMDGLVAATLVDLMERQRGVVFTEMGLDC</sequence>
<reference key="1">
    <citation type="journal article" date="2017" name="Genome Biol.">
        <title>Comparative genomics reveals high biological diversity and specific adaptations in the industrially and medically important fungal genus Aspergillus.</title>
        <authorList>
            <person name="de Vries R.P."/>
            <person name="Riley R."/>
            <person name="Wiebenga A."/>
            <person name="Aguilar-Osorio G."/>
            <person name="Amillis S."/>
            <person name="Uchima C.A."/>
            <person name="Anderluh G."/>
            <person name="Asadollahi M."/>
            <person name="Askin M."/>
            <person name="Barry K."/>
            <person name="Battaglia E."/>
            <person name="Bayram O."/>
            <person name="Benocci T."/>
            <person name="Braus-Stromeyer S.A."/>
            <person name="Caldana C."/>
            <person name="Canovas D."/>
            <person name="Cerqueira G.C."/>
            <person name="Chen F."/>
            <person name="Chen W."/>
            <person name="Choi C."/>
            <person name="Clum A."/>
            <person name="Dos Santos R.A."/>
            <person name="Damasio A.R."/>
            <person name="Diallinas G."/>
            <person name="Emri T."/>
            <person name="Fekete E."/>
            <person name="Flipphi M."/>
            <person name="Freyberg S."/>
            <person name="Gallo A."/>
            <person name="Gournas C."/>
            <person name="Habgood R."/>
            <person name="Hainaut M."/>
            <person name="Harispe M.L."/>
            <person name="Henrissat B."/>
            <person name="Hilden K.S."/>
            <person name="Hope R."/>
            <person name="Hossain A."/>
            <person name="Karabika E."/>
            <person name="Karaffa L."/>
            <person name="Karanyi Z."/>
            <person name="Krasevec N."/>
            <person name="Kuo A."/>
            <person name="Kusch H."/>
            <person name="LaButti K."/>
            <person name="Lagendijk E.L."/>
            <person name="Lapidus A."/>
            <person name="Levasseur A."/>
            <person name="Lindquist E."/>
            <person name="Lipzen A."/>
            <person name="Logrieco A.F."/>
            <person name="MacCabe A."/>
            <person name="Maekelae M.R."/>
            <person name="Malavazi I."/>
            <person name="Melin P."/>
            <person name="Meyer V."/>
            <person name="Mielnichuk N."/>
            <person name="Miskei M."/>
            <person name="Molnar A.P."/>
            <person name="Mule G."/>
            <person name="Ngan C.Y."/>
            <person name="Orejas M."/>
            <person name="Orosz E."/>
            <person name="Ouedraogo J.P."/>
            <person name="Overkamp K.M."/>
            <person name="Park H.-S."/>
            <person name="Perrone G."/>
            <person name="Piumi F."/>
            <person name="Punt P.J."/>
            <person name="Ram A.F."/>
            <person name="Ramon A."/>
            <person name="Rauscher S."/>
            <person name="Record E."/>
            <person name="Riano-Pachon D.M."/>
            <person name="Robert V."/>
            <person name="Roehrig J."/>
            <person name="Ruller R."/>
            <person name="Salamov A."/>
            <person name="Salih N.S."/>
            <person name="Samson R.A."/>
            <person name="Sandor E."/>
            <person name="Sanguinetti M."/>
            <person name="Schuetze T."/>
            <person name="Sepcic K."/>
            <person name="Shelest E."/>
            <person name="Sherlock G."/>
            <person name="Sophianopoulou V."/>
            <person name="Squina F.M."/>
            <person name="Sun H."/>
            <person name="Susca A."/>
            <person name="Todd R.B."/>
            <person name="Tsang A."/>
            <person name="Unkles S.E."/>
            <person name="van de Wiele N."/>
            <person name="van Rossen-Uffink D."/>
            <person name="Oliveira J.V."/>
            <person name="Vesth T.C."/>
            <person name="Visser J."/>
            <person name="Yu J.-H."/>
            <person name="Zhou M."/>
            <person name="Andersen M.R."/>
            <person name="Archer D.B."/>
            <person name="Baker S.E."/>
            <person name="Benoit I."/>
            <person name="Brakhage A.A."/>
            <person name="Braus G.H."/>
            <person name="Fischer R."/>
            <person name="Frisvad J.C."/>
            <person name="Goldman G.H."/>
            <person name="Houbraken J."/>
            <person name="Oakley B."/>
            <person name="Pocsi I."/>
            <person name="Scazzocchio C."/>
            <person name="Seiboth B."/>
            <person name="vanKuyk P.A."/>
            <person name="Wortman J."/>
            <person name="Dyer P.S."/>
            <person name="Grigoriev I.V."/>
        </authorList>
    </citation>
    <scope>NUCLEOTIDE SEQUENCE [LARGE SCALE GENOMIC DNA]</scope>
    <source>
        <strain>ATCC 16872 / CBS 172.66 / WB 5094</strain>
    </source>
</reference>
<reference key="2">
    <citation type="journal article" date="2020" name="Fungal Genet. Biol.">
        <title>Acurin A, a novel hybrid compound, biosynthesized by individually translated PKS- and NRPS-encoding genes in Aspergillus aculeatus.</title>
        <authorList>
            <person name="Wolff P.B."/>
            <person name="Nielsen M.L."/>
            <person name="Slot J.C."/>
            <person name="Andersen L.N."/>
            <person name="Petersen L.M."/>
            <person name="Isbrandt T."/>
            <person name="Holm D.K."/>
            <person name="Mortensen U.H."/>
            <person name="Noedvig C.S."/>
            <person name="Larsen T.O."/>
            <person name="Hoof J.B."/>
        </authorList>
    </citation>
    <scope>FUNCTION</scope>
    <scope>DOMAIN</scope>
    <scope>DISRUPTION PHENOTYPE</scope>
    <scope>PATHWAY</scope>
    <scope>INDUCTION</scope>
</reference>
<dbReference type="EC" id="6.3.2.-" evidence="3"/>
<dbReference type="EMBL" id="KV878980">
    <property type="protein sequence ID" value="OJJ98497.1"/>
    <property type="molecule type" value="Genomic_DNA"/>
</dbReference>
<dbReference type="RefSeq" id="XP_020054837.1">
    <property type="nucleotide sequence ID" value="XM_020196524.1"/>
</dbReference>
<dbReference type="SMR" id="A0A1L9WR63"/>
<dbReference type="STRING" id="690307.A0A1L9WR63"/>
<dbReference type="GeneID" id="30970338"/>
<dbReference type="VEuPathDB" id="FungiDB:ASPACDRAFT_122295"/>
<dbReference type="OMA" id="WEWHISA"/>
<dbReference type="OrthoDB" id="4444247at2759"/>
<dbReference type="Proteomes" id="UP000184546">
    <property type="component" value="Unassembled WGS sequence"/>
</dbReference>
<dbReference type="GO" id="GO:0005829">
    <property type="term" value="C:cytosol"/>
    <property type="evidence" value="ECO:0007669"/>
    <property type="project" value="TreeGrafter"/>
</dbReference>
<dbReference type="GO" id="GO:0009366">
    <property type="term" value="C:enterobactin synthetase complex"/>
    <property type="evidence" value="ECO:0007669"/>
    <property type="project" value="TreeGrafter"/>
</dbReference>
<dbReference type="GO" id="GO:0047527">
    <property type="term" value="F:2,3-dihydroxybenzoate-serine ligase activity"/>
    <property type="evidence" value="ECO:0007669"/>
    <property type="project" value="TreeGrafter"/>
</dbReference>
<dbReference type="GO" id="GO:0031177">
    <property type="term" value="F:phosphopantetheine binding"/>
    <property type="evidence" value="ECO:0007669"/>
    <property type="project" value="InterPro"/>
</dbReference>
<dbReference type="GO" id="GO:0043041">
    <property type="term" value="P:amino acid activation for nonribosomal peptide biosynthetic process"/>
    <property type="evidence" value="ECO:0007669"/>
    <property type="project" value="TreeGrafter"/>
</dbReference>
<dbReference type="GO" id="GO:0009239">
    <property type="term" value="P:enterobactin biosynthetic process"/>
    <property type="evidence" value="ECO:0007669"/>
    <property type="project" value="TreeGrafter"/>
</dbReference>
<dbReference type="CDD" id="cd05930">
    <property type="entry name" value="A_NRPS"/>
    <property type="match status" value="1"/>
</dbReference>
<dbReference type="CDD" id="cd19532">
    <property type="entry name" value="C_PKS-NRPS"/>
    <property type="match status" value="1"/>
</dbReference>
<dbReference type="Gene3D" id="3.30.300.30">
    <property type="match status" value="1"/>
</dbReference>
<dbReference type="Gene3D" id="1.10.1200.10">
    <property type="entry name" value="ACP-like"/>
    <property type="match status" value="1"/>
</dbReference>
<dbReference type="Gene3D" id="3.30.559.10">
    <property type="entry name" value="Chloramphenicol acetyltransferase-like domain"/>
    <property type="match status" value="1"/>
</dbReference>
<dbReference type="Gene3D" id="3.40.50.12780">
    <property type="entry name" value="N-terminal domain of ligase-like"/>
    <property type="match status" value="1"/>
</dbReference>
<dbReference type="Gene3D" id="3.40.50.720">
    <property type="entry name" value="NAD(P)-binding Rossmann-like Domain"/>
    <property type="match status" value="1"/>
</dbReference>
<dbReference type="Gene3D" id="3.30.559.30">
    <property type="entry name" value="Nonribosomal peptide synthetase, condensation domain"/>
    <property type="match status" value="1"/>
</dbReference>
<dbReference type="InterPro" id="IPR010071">
    <property type="entry name" value="AA_adenyl_dom"/>
</dbReference>
<dbReference type="InterPro" id="IPR036736">
    <property type="entry name" value="ACP-like_sf"/>
</dbReference>
<dbReference type="InterPro" id="IPR045851">
    <property type="entry name" value="AMP-bd_C_sf"/>
</dbReference>
<dbReference type="InterPro" id="IPR020845">
    <property type="entry name" value="AMP-binding_CS"/>
</dbReference>
<dbReference type="InterPro" id="IPR000873">
    <property type="entry name" value="AMP-dep_synth/lig_dom"/>
</dbReference>
<dbReference type="InterPro" id="IPR042099">
    <property type="entry name" value="ANL_N_sf"/>
</dbReference>
<dbReference type="InterPro" id="IPR023213">
    <property type="entry name" value="CAT-like_dom_sf"/>
</dbReference>
<dbReference type="InterPro" id="IPR001242">
    <property type="entry name" value="Condensatn"/>
</dbReference>
<dbReference type="InterPro" id="IPR013120">
    <property type="entry name" value="Far_NAD-bd"/>
</dbReference>
<dbReference type="InterPro" id="IPR036291">
    <property type="entry name" value="NAD(P)-bd_dom_sf"/>
</dbReference>
<dbReference type="InterPro" id="IPR020806">
    <property type="entry name" value="PKS_PP-bd"/>
</dbReference>
<dbReference type="InterPro" id="IPR009081">
    <property type="entry name" value="PP-bd_ACP"/>
</dbReference>
<dbReference type="NCBIfam" id="TIGR01733">
    <property type="entry name" value="AA-adenyl-dom"/>
    <property type="match status" value="1"/>
</dbReference>
<dbReference type="PANTHER" id="PTHR45527:SF1">
    <property type="entry name" value="FATTY ACID SYNTHASE"/>
    <property type="match status" value="1"/>
</dbReference>
<dbReference type="PANTHER" id="PTHR45527">
    <property type="entry name" value="NONRIBOSOMAL PEPTIDE SYNTHETASE"/>
    <property type="match status" value="1"/>
</dbReference>
<dbReference type="Pfam" id="PF00501">
    <property type="entry name" value="AMP-binding"/>
    <property type="match status" value="1"/>
</dbReference>
<dbReference type="Pfam" id="PF00668">
    <property type="entry name" value="Condensation"/>
    <property type="match status" value="1"/>
</dbReference>
<dbReference type="Pfam" id="PF07993">
    <property type="entry name" value="NAD_binding_4"/>
    <property type="match status" value="1"/>
</dbReference>
<dbReference type="Pfam" id="PF00550">
    <property type="entry name" value="PP-binding"/>
    <property type="match status" value="1"/>
</dbReference>
<dbReference type="SMART" id="SM00823">
    <property type="entry name" value="PKS_PP"/>
    <property type="match status" value="1"/>
</dbReference>
<dbReference type="SUPFAM" id="SSF56801">
    <property type="entry name" value="Acetyl-CoA synthetase-like"/>
    <property type="match status" value="1"/>
</dbReference>
<dbReference type="SUPFAM" id="SSF47336">
    <property type="entry name" value="ACP-like"/>
    <property type="match status" value="1"/>
</dbReference>
<dbReference type="SUPFAM" id="SSF52777">
    <property type="entry name" value="CoA-dependent acyltransferases"/>
    <property type="match status" value="2"/>
</dbReference>
<dbReference type="SUPFAM" id="SSF51735">
    <property type="entry name" value="NAD(P)-binding Rossmann-fold domains"/>
    <property type="match status" value="1"/>
</dbReference>
<dbReference type="PROSITE" id="PS00455">
    <property type="entry name" value="AMP_BINDING"/>
    <property type="match status" value="1"/>
</dbReference>
<dbReference type="PROSITE" id="PS50075">
    <property type="entry name" value="CARRIER"/>
    <property type="match status" value="1"/>
</dbReference>
<name>ACRB_ASPA1</name>
<organism>
    <name type="scientific">Aspergillus aculeatus (strain ATCC 16872 / CBS 172.66 / WB 5094)</name>
    <dbReference type="NCBI Taxonomy" id="690307"/>
    <lineage>
        <taxon>Eukaryota</taxon>
        <taxon>Fungi</taxon>
        <taxon>Dikarya</taxon>
        <taxon>Ascomycota</taxon>
        <taxon>Pezizomycotina</taxon>
        <taxon>Eurotiomycetes</taxon>
        <taxon>Eurotiomycetidae</taxon>
        <taxon>Eurotiales</taxon>
        <taxon>Aspergillaceae</taxon>
        <taxon>Aspergillus</taxon>
        <taxon>Aspergillus subgen. Circumdati</taxon>
    </lineage>
</organism>
<proteinExistence type="evidence at transcript level"/>
<evidence type="ECO:0000255" key="1"/>
<evidence type="ECO:0000255" key="2">
    <source>
        <dbReference type="PROSITE-ProRule" id="PRU00258"/>
    </source>
</evidence>
<evidence type="ECO:0000269" key="3">
    <source>
    </source>
</evidence>
<evidence type="ECO:0000303" key="4">
    <source>
    </source>
</evidence>
<evidence type="ECO:0000305" key="5"/>
<evidence type="ECO:0000305" key="6">
    <source>
    </source>
</evidence>
<accession>A0A1L9WR63</accession>
<keyword id="KW-0436">Ligase</keyword>
<keyword id="KW-0511">Multifunctional enzyme</keyword>
<keyword id="KW-0596">Phosphopantetheine</keyword>
<keyword id="KW-0597">Phosphoprotein</keyword>
<keyword id="KW-1185">Reference proteome</keyword>
<comment type="function">
    <text evidence="3 6">Nonribosomal peptide synthetase; part of the cluster that mediates the biosynthesis of acurin A, a highly reduced polyketide coupled to a serine via a peptide bond (PubMed:32234543). The activities of the highly reducing polyketide synthase acrA and the nonribosomal peptide synthetase acrB are collectively responsible for the synthesis of the acurin A core structure with a heptaketide backbone produced by acrA covalently fused to a L-serine by acrB (PubMed:32234543). After the formation of the PK-NRP hybrid product, it is detached from acrB by reductive release to set up the formation of the lactam ring by aldol condensation (Probable). The hydrolyase acrC then catalyzes water loss to generate a double bond in the ring (Probable). This double bond is probably reduced, which is followed by three oxidations at C-22 to generate the carboxylic acid moiety, involving probably the FAD-binding monooxygenase acrE and the cytochrome P450 monooxygenases acrD and acrF (Probable). Finally, a last methylation step performed by the O-methyltransferase acrG leads to the production of acurin A (Probable).</text>
</comment>
<comment type="pathway">
    <text evidence="3">Secondary metabolite biosynthesis.</text>
</comment>
<comment type="induction">
    <text evidence="3">Expression is positively regulated by the acurin A cluster-specific transcription regulator acrR.</text>
</comment>
<comment type="domain">
    <text evidence="6">NRP synthetases are composed of discrete domains (adenylation (A), thiolation (T) or peptidyl carrier protein (PCP) and condensation (C) domains) which when grouped together are referred to as a single module. Each module is responsible for the recognition (via the A domain) and incorporation of a single amino acid into the growing peptide product. Thus, an NRP synthetase is generally composed of one or more modules and can terminate in a thioesterase domain (TE) that releases the newly synthesized peptide from the enzyme. Occasionally, methyltransferase domains (responsible for amino acid methylation) are present within the NRP synthetase. AcrB has the following architecture: C-A-T-TE.</text>
</comment>
<comment type="disruption phenotype">
    <text evidence="3">Abolishes the production of acurin A.</text>
</comment>
<comment type="similarity">
    <text evidence="5">Belongs to the NRP synthetase family.</text>
</comment>